<feature type="chain" id="PRO_1000011321" description="Probable endonuclease 4">
    <location>
        <begin position="1"/>
        <end position="276"/>
    </location>
</feature>
<feature type="binding site" evidence="1">
    <location>
        <position position="70"/>
    </location>
    <ligand>
        <name>Zn(2+)</name>
        <dbReference type="ChEBI" id="CHEBI:29105"/>
        <label>1</label>
    </ligand>
</feature>
<feature type="binding site" evidence="1">
    <location>
        <position position="108"/>
    </location>
    <ligand>
        <name>Zn(2+)</name>
        <dbReference type="ChEBI" id="CHEBI:29105"/>
        <label>1</label>
    </ligand>
</feature>
<feature type="binding site" evidence="1">
    <location>
        <position position="143"/>
    </location>
    <ligand>
        <name>Zn(2+)</name>
        <dbReference type="ChEBI" id="CHEBI:29105"/>
        <label>1</label>
    </ligand>
</feature>
<feature type="binding site" evidence="1">
    <location>
        <position position="143"/>
    </location>
    <ligand>
        <name>Zn(2+)</name>
        <dbReference type="ChEBI" id="CHEBI:29105"/>
        <label>2</label>
    </ligand>
</feature>
<feature type="binding site" evidence="1">
    <location>
        <position position="176"/>
    </location>
    <ligand>
        <name>Zn(2+)</name>
        <dbReference type="ChEBI" id="CHEBI:29105"/>
        <label>2</label>
    </ligand>
</feature>
<feature type="binding site" evidence="1">
    <location>
        <position position="179"/>
    </location>
    <ligand>
        <name>Zn(2+)</name>
        <dbReference type="ChEBI" id="CHEBI:29105"/>
        <label>3</label>
    </ligand>
</feature>
<feature type="binding site" evidence="1">
    <location>
        <position position="210"/>
    </location>
    <ligand>
        <name>Zn(2+)</name>
        <dbReference type="ChEBI" id="CHEBI:29105"/>
        <label>2</label>
    </ligand>
</feature>
<feature type="binding site" evidence="1">
    <location>
        <position position="223"/>
    </location>
    <ligand>
        <name>Zn(2+)</name>
        <dbReference type="ChEBI" id="CHEBI:29105"/>
        <label>3</label>
    </ligand>
</feature>
<feature type="binding site" evidence="1">
    <location>
        <position position="225"/>
    </location>
    <ligand>
        <name>Zn(2+)</name>
        <dbReference type="ChEBI" id="CHEBI:29105"/>
        <label>3</label>
    </ligand>
</feature>
<feature type="binding site" evidence="1">
    <location>
        <position position="255"/>
    </location>
    <ligand>
        <name>Zn(2+)</name>
        <dbReference type="ChEBI" id="CHEBI:29105"/>
        <label>2</label>
    </ligand>
</feature>
<keyword id="KW-0227">DNA damage</keyword>
<keyword id="KW-0234">DNA repair</keyword>
<keyword id="KW-0255">Endonuclease</keyword>
<keyword id="KW-0378">Hydrolase</keyword>
<keyword id="KW-0479">Metal-binding</keyword>
<keyword id="KW-0540">Nuclease</keyword>
<keyword id="KW-0862">Zinc</keyword>
<comment type="function">
    <text evidence="1">Endonuclease IV plays a role in DNA repair. It cleaves phosphodiester bonds at apurinic or apyrimidinic (AP) sites, generating a 3'-hydroxyl group and a 5'-terminal sugar phosphate.</text>
</comment>
<comment type="catalytic activity">
    <reaction evidence="1">
        <text>Endonucleolytic cleavage to 5'-phosphooligonucleotide end-products.</text>
        <dbReference type="EC" id="3.1.21.2"/>
    </reaction>
</comment>
<comment type="cofactor">
    <cofactor evidence="1">
        <name>Zn(2+)</name>
        <dbReference type="ChEBI" id="CHEBI:29105"/>
    </cofactor>
    <text evidence="1">Binds 3 Zn(2+) ions.</text>
</comment>
<comment type="similarity">
    <text evidence="1">Belongs to the AP endonuclease 2 family.</text>
</comment>
<sequence>MIKIGSHVRFRKPDYLFGAIQESLENKANTAMIFLGPPQSTFRVKPENYKLQDYQKHFFKQIPPEDIIVHAPYIINPASPIKAQFSNDFLVKEIEKINYIGAKFLVLHPGFFTSFTKEVAKKQLISSLKSILEKTKNVILLLETMSGKGSEMCANFEEIVEIVEAVESPRIGICLDTCHVWDAGYDLKNFPEFCKEIRRTRLINYLKVIHLNDSLSPLGSKKDRHANIGKGFIGLESLRKIIFDPLFANIPKILETPYVDNKPIYDQEIALLLKKV</sequence>
<accession>Q4AAX4</accession>
<organism>
    <name type="scientific">Mesomycoplasma hyopneumoniae (strain J / ATCC 25934 / NCTC 10110)</name>
    <name type="common">Mycoplasma hyopneumoniae</name>
    <dbReference type="NCBI Taxonomy" id="262719"/>
    <lineage>
        <taxon>Bacteria</taxon>
        <taxon>Bacillati</taxon>
        <taxon>Mycoplasmatota</taxon>
        <taxon>Mycoplasmoidales</taxon>
        <taxon>Metamycoplasmataceae</taxon>
        <taxon>Mesomycoplasma</taxon>
    </lineage>
</organism>
<proteinExistence type="inferred from homology"/>
<dbReference type="EC" id="3.1.21.2" evidence="1"/>
<dbReference type="EMBL" id="AE017243">
    <property type="protein sequence ID" value="AAZ44152.1"/>
    <property type="molecule type" value="Genomic_DNA"/>
</dbReference>
<dbReference type="RefSeq" id="WP_011283879.1">
    <property type="nucleotide sequence ID" value="NC_007295.1"/>
</dbReference>
<dbReference type="SMR" id="Q4AAX4"/>
<dbReference type="GeneID" id="41334347"/>
<dbReference type="KEGG" id="mhj:MHJ_0058"/>
<dbReference type="eggNOG" id="COG0648">
    <property type="taxonomic scope" value="Bacteria"/>
</dbReference>
<dbReference type="HOGENOM" id="CLU_025885_0_4_14"/>
<dbReference type="OrthoDB" id="9805666at2"/>
<dbReference type="Proteomes" id="UP000000548">
    <property type="component" value="Chromosome"/>
</dbReference>
<dbReference type="GO" id="GO:0008833">
    <property type="term" value="F:deoxyribonuclease IV (phage-T4-induced) activity"/>
    <property type="evidence" value="ECO:0007669"/>
    <property type="project" value="UniProtKB-UniRule"/>
</dbReference>
<dbReference type="GO" id="GO:0003677">
    <property type="term" value="F:DNA binding"/>
    <property type="evidence" value="ECO:0007669"/>
    <property type="project" value="InterPro"/>
</dbReference>
<dbReference type="GO" id="GO:0003906">
    <property type="term" value="F:DNA-(apurinic or apyrimidinic site) endonuclease activity"/>
    <property type="evidence" value="ECO:0007669"/>
    <property type="project" value="TreeGrafter"/>
</dbReference>
<dbReference type="GO" id="GO:0008081">
    <property type="term" value="F:phosphoric diester hydrolase activity"/>
    <property type="evidence" value="ECO:0007669"/>
    <property type="project" value="TreeGrafter"/>
</dbReference>
<dbReference type="GO" id="GO:0008270">
    <property type="term" value="F:zinc ion binding"/>
    <property type="evidence" value="ECO:0007669"/>
    <property type="project" value="UniProtKB-UniRule"/>
</dbReference>
<dbReference type="GO" id="GO:0006284">
    <property type="term" value="P:base-excision repair"/>
    <property type="evidence" value="ECO:0007669"/>
    <property type="project" value="TreeGrafter"/>
</dbReference>
<dbReference type="CDD" id="cd00019">
    <property type="entry name" value="AP2Ec"/>
    <property type="match status" value="1"/>
</dbReference>
<dbReference type="FunFam" id="3.20.20.150:FF:000001">
    <property type="entry name" value="Probable endonuclease 4"/>
    <property type="match status" value="1"/>
</dbReference>
<dbReference type="Gene3D" id="3.20.20.150">
    <property type="entry name" value="Divalent-metal-dependent TIM barrel enzymes"/>
    <property type="match status" value="1"/>
</dbReference>
<dbReference type="HAMAP" id="MF_00152">
    <property type="entry name" value="Nfo"/>
    <property type="match status" value="1"/>
</dbReference>
<dbReference type="InterPro" id="IPR001719">
    <property type="entry name" value="AP_endonuc_2"/>
</dbReference>
<dbReference type="InterPro" id="IPR018246">
    <property type="entry name" value="AP_endonuc_F2_Zn_BS"/>
</dbReference>
<dbReference type="InterPro" id="IPR036237">
    <property type="entry name" value="Xyl_isomerase-like_sf"/>
</dbReference>
<dbReference type="InterPro" id="IPR013022">
    <property type="entry name" value="Xyl_isomerase-like_TIM-brl"/>
</dbReference>
<dbReference type="NCBIfam" id="TIGR00587">
    <property type="entry name" value="nfo"/>
    <property type="match status" value="1"/>
</dbReference>
<dbReference type="NCBIfam" id="NF002196">
    <property type="entry name" value="PRK01060.1-1"/>
    <property type="match status" value="1"/>
</dbReference>
<dbReference type="PANTHER" id="PTHR21445:SF0">
    <property type="entry name" value="APURINIC-APYRIMIDINIC ENDONUCLEASE"/>
    <property type="match status" value="1"/>
</dbReference>
<dbReference type="PANTHER" id="PTHR21445">
    <property type="entry name" value="ENDONUCLEASE IV ENDODEOXYRIBONUCLEASE IV"/>
    <property type="match status" value="1"/>
</dbReference>
<dbReference type="Pfam" id="PF01261">
    <property type="entry name" value="AP_endonuc_2"/>
    <property type="match status" value="1"/>
</dbReference>
<dbReference type="SMART" id="SM00518">
    <property type="entry name" value="AP2Ec"/>
    <property type="match status" value="1"/>
</dbReference>
<dbReference type="SUPFAM" id="SSF51658">
    <property type="entry name" value="Xylose isomerase-like"/>
    <property type="match status" value="1"/>
</dbReference>
<dbReference type="PROSITE" id="PS00729">
    <property type="entry name" value="AP_NUCLEASE_F2_1"/>
    <property type="match status" value="1"/>
</dbReference>
<dbReference type="PROSITE" id="PS00730">
    <property type="entry name" value="AP_NUCLEASE_F2_2"/>
    <property type="match status" value="1"/>
</dbReference>
<dbReference type="PROSITE" id="PS00731">
    <property type="entry name" value="AP_NUCLEASE_F2_3"/>
    <property type="match status" value="1"/>
</dbReference>
<dbReference type="PROSITE" id="PS51432">
    <property type="entry name" value="AP_NUCLEASE_F2_4"/>
    <property type="match status" value="1"/>
</dbReference>
<gene>
    <name evidence="1" type="primary">nfo</name>
    <name type="ordered locus">MHJ_0058</name>
</gene>
<evidence type="ECO:0000255" key="1">
    <source>
        <dbReference type="HAMAP-Rule" id="MF_00152"/>
    </source>
</evidence>
<protein>
    <recommendedName>
        <fullName evidence="1">Probable endonuclease 4</fullName>
        <ecNumber evidence="1">3.1.21.2</ecNumber>
    </recommendedName>
    <alternativeName>
        <fullName evidence="1">Endodeoxyribonuclease IV</fullName>
    </alternativeName>
    <alternativeName>
        <fullName evidence="1">Endonuclease IV</fullName>
    </alternativeName>
</protein>
<name>END4_MESHJ</name>
<reference key="1">
    <citation type="journal article" date="2005" name="J. Bacteriol.">
        <title>Swine and poultry pathogens: the complete genome sequences of two strains of Mycoplasma hyopneumoniae and a strain of Mycoplasma synoviae.</title>
        <authorList>
            <person name="Vasconcelos A.T.R."/>
            <person name="Ferreira H.B."/>
            <person name="Bizarro C.V."/>
            <person name="Bonatto S.L."/>
            <person name="Carvalho M.O."/>
            <person name="Pinto P.M."/>
            <person name="Almeida D.F."/>
            <person name="Almeida L.G.P."/>
            <person name="Almeida R."/>
            <person name="Alves-Junior L."/>
            <person name="Assuncao E.N."/>
            <person name="Azevedo V.A.C."/>
            <person name="Bogo M.R."/>
            <person name="Brigido M.M."/>
            <person name="Brocchi M."/>
            <person name="Burity H.A."/>
            <person name="Camargo A.A."/>
            <person name="Camargo S.S."/>
            <person name="Carepo M.S."/>
            <person name="Carraro D.M."/>
            <person name="de Mattos Cascardo J.C."/>
            <person name="Castro L.A."/>
            <person name="Cavalcanti G."/>
            <person name="Chemale G."/>
            <person name="Collevatti R.G."/>
            <person name="Cunha C.W."/>
            <person name="Dallagiovanna B."/>
            <person name="Dambros B.P."/>
            <person name="Dellagostin O.A."/>
            <person name="Falcao C."/>
            <person name="Fantinatti-Garboggini F."/>
            <person name="Felipe M.S.S."/>
            <person name="Fiorentin L."/>
            <person name="Franco G.R."/>
            <person name="Freitas N.S.A."/>
            <person name="Frias D."/>
            <person name="Grangeiro T.B."/>
            <person name="Grisard E.C."/>
            <person name="Guimaraes C.T."/>
            <person name="Hungria M."/>
            <person name="Jardim S.N."/>
            <person name="Krieger M.A."/>
            <person name="Laurino J.P."/>
            <person name="Lima L.F.A."/>
            <person name="Lopes M.I."/>
            <person name="Loreto E.L.S."/>
            <person name="Madeira H.M.F."/>
            <person name="Manfio G.P."/>
            <person name="Maranhao A.Q."/>
            <person name="Martinkovics C.T."/>
            <person name="Medeiros S.R.B."/>
            <person name="Moreira M.A.M."/>
            <person name="Neiva M."/>
            <person name="Ramalho-Neto C.E."/>
            <person name="Nicolas M.F."/>
            <person name="Oliveira S.C."/>
            <person name="Paixao R.F.C."/>
            <person name="Pedrosa F.O."/>
            <person name="Pena S.D.J."/>
            <person name="Pereira M."/>
            <person name="Pereira-Ferrari L."/>
            <person name="Piffer I."/>
            <person name="Pinto L.S."/>
            <person name="Potrich D.P."/>
            <person name="Salim A.C.M."/>
            <person name="Santos F.R."/>
            <person name="Schmitt R."/>
            <person name="Schneider M.P.C."/>
            <person name="Schrank A."/>
            <person name="Schrank I.S."/>
            <person name="Schuck A.F."/>
            <person name="Seuanez H.N."/>
            <person name="Silva D.W."/>
            <person name="Silva R."/>
            <person name="Silva S.C."/>
            <person name="Soares C.M.A."/>
            <person name="Souza K.R.L."/>
            <person name="Souza R.C."/>
            <person name="Staats C.C."/>
            <person name="Steffens M.B.R."/>
            <person name="Teixeira S.M.R."/>
            <person name="Urmenyi T.P."/>
            <person name="Vainstein M.H."/>
            <person name="Zuccherato L.W."/>
            <person name="Simpson A.J.G."/>
            <person name="Zaha A."/>
        </authorList>
    </citation>
    <scope>NUCLEOTIDE SEQUENCE [LARGE SCALE GENOMIC DNA]</scope>
    <source>
        <strain>J / ATCC 25934 / NCTC 10110</strain>
    </source>
</reference>